<dbReference type="EC" id="3.1.11.6" evidence="1"/>
<dbReference type="EMBL" id="AM040265">
    <property type="protein sequence ID" value="CAJ12641.1"/>
    <property type="molecule type" value="Genomic_DNA"/>
</dbReference>
<dbReference type="SMR" id="Q2YL15"/>
<dbReference type="STRING" id="359391.BAB2_0475"/>
<dbReference type="KEGG" id="bmf:BAB2_0475"/>
<dbReference type="PATRIC" id="fig|359391.11.peg.2667"/>
<dbReference type="HOGENOM" id="CLU_023625_3_1_5"/>
<dbReference type="PhylomeDB" id="Q2YL15"/>
<dbReference type="PRO" id="PR:Q2YL15"/>
<dbReference type="Proteomes" id="UP000002719">
    <property type="component" value="Chromosome II"/>
</dbReference>
<dbReference type="GO" id="GO:0005737">
    <property type="term" value="C:cytoplasm"/>
    <property type="evidence" value="ECO:0007669"/>
    <property type="project" value="UniProtKB-SubCell"/>
</dbReference>
<dbReference type="GO" id="GO:0009318">
    <property type="term" value="C:exodeoxyribonuclease VII complex"/>
    <property type="evidence" value="ECO:0007669"/>
    <property type="project" value="InterPro"/>
</dbReference>
<dbReference type="GO" id="GO:0008855">
    <property type="term" value="F:exodeoxyribonuclease VII activity"/>
    <property type="evidence" value="ECO:0007669"/>
    <property type="project" value="UniProtKB-UniRule"/>
</dbReference>
<dbReference type="GO" id="GO:0003676">
    <property type="term" value="F:nucleic acid binding"/>
    <property type="evidence" value="ECO:0007669"/>
    <property type="project" value="InterPro"/>
</dbReference>
<dbReference type="GO" id="GO:0006308">
    <property type="term" value="P:DNA catabolic process"/>
    <property type="evidence" value="ECO:0007669"/>
    <property type="project" value="UniProtKB-UniRule"/>
</dbReference>
<dbReference type="CDD" id="cd04489">
    <property type="entry name" value="ExoVII_LU_OBF"/>
    <property type="match status" value="1"/>
</dbReference>
<dbReference type="HAMAP" id="MF_00378">
    <property type="entry name" value="Exonuc_7_L"/>
    <property type="match status" value="1"/>
</dbReference>
<dbReference type="InterPro" id="IPR003753">
    <property type="entry name" value="Exonuc_VII_L"/>
</dbReference>
<dbReference type="InterPro" id="IPR020579">
    <property type="entry name" value="Exonuc_VII_lsu_C"/>
</dbReference>
<dbReference type="InterPro" id="IPR025824">
    <property type="entry name" value="OB-fold_nuc-bd_dom"/>
</dbReference>
<dbReference type="NCBIfam" id="TIGR00237">
    <property type="entry name" value="xseA"/>
    <property type="match status" value="1"/>
</dbReference>
<dbReference type="PANTHER" id="PTHR30008">
    <property type="entry name" value="EXODEOXYRIBONUCLEASE 7 LARGE SUBUNIT"/>
    <property type="match status" value="1"/>
</dbReference>
<dbReference type="PANTHER" id="PTHR30008:SF0">
    <property type="entry name" value="EXODEOXYRIBONUCLEASE 7 LARGE SUBUNIT"/>
    <property type="match status" value="1"/>
</dbReference>
<dbReference type="Pfam" id="PF02601">
    <property type="entry name" value="Exonuc_VII_L"/>
    <property type="match status" value="1"/>
</dbReference>
<dbReference type="Pfam" id="PF13742">
    <property type="entry name" value="tRNA_anti_2"/>
    <property type="match status" value="1"/>
</dbReference>
<feature type="chain" id="PRO_0000273649" description="Exodeoxyribonuclease 7 large subunit">
    <location>
        <begin position="1"/>
        <end position="511"/>
    </location>
</feature>
<accession>Q2YL15</accession>
<protein>
    <recommendedName>
        <fullName evidence="1">Exodeoxyribonuclease 7 large subunit</fullName>
        <ecNumber evidence="1">3.1.11.6</ecNumber>
    </recommendedName>
    <alternativeName>
        <fullName evidence="1">Exodeoxyribonuclease VII large subunit</fullName>
        <shortName evidence="1">Exonuclease VII large subunit</shortName>
    </alternativeName>
</protein>
<keyword id="KW-0963">Cytoplasm</keyword>
<keyword id="KW-0269">Exonuclease</keyword>
<keyword id="KW-0378">Hydrolase</keyword>
<keyword id="KW-0540">Nuclease</keyword>
<keyword id="KW-1185">Reference proteome</keyword>
<gene>
    <name evidence="1" type="primary">xseA</name>
    <name type="ordered locus">BAB2_0475</name>
</gene>
<name>EX7L_BRUA2</name>
<sequence>MASDSSFPGASSNVAEYSVSEISGALKRTVEDTFGHVRVRGEISGYRGPHSSGHAYFALKDDRARLEAVIWRGSMSRLRFRPEEGMEVIATGKLTTYPGSSKYQIVIEQMEPAGAGALMALLEERKQRLAAEGLFDPTLKQLLPFMPRVIGVVTSPTGAVIRDIIHRISDRYPLRVIVWPVRVQGDTCGPEVATAVNGFNTLPDDGPIPRPDVLIVARGGGSLEDLWGFNDEIVVRAVAASHIPVISAVGHETDWTLIDLAADMRAPTPTGAAEMAVPVKADLQASLASQSARLSSAMSRFFDQKRQAHRAAARAMPSADQLLALPRRRFDEAASRLTRALFVNTQKKRVHFDGHARQLSPRLLQRRLVELERGVTMLGQRLPRALEAFLRERRTAFTHRANRLSPEPILRRTRLTGSTLEQLDRRRDQAVRLLIERVKRRSQELDRLMRTLSYESVLERGFAVVFDAQGKPVKQAAAVSPGDALSVRFRDGDVGVVARAGLTIPDPTKGQ</sequence>
<organism>
    <name type="scientific">Brucella abortus (strain 2308)</name>
    <dbReference type="NCBI Taxonomy" id="359391"/>
    <lineage>
        <taxon>Bacteria</taxon>
        <taxon>Pseudomonadati</taxon>
        <taxon>Pseudomonadota</taxon>
        <taxon>Alphaproteobacteria</taxon>
        <taxon>Hyphomicrobiales</taxon>
        <taxon>Brucellaceae</taxon>
        <taxon>Brucella/Ochrobactrum group</taxon>
        <taxon>Brucella</taxon>
    </lineage>
</organism>
<proteinExistence type="inferred from homology"/>
<reference key="1">
    <citation type="journal article" date="2005" name="Infect. Immun.">
        <title>Whole-genome analyses of speciation events in pathogenic Brucellae.</title>
        <authorList>
            <person name="Chain P.S."/>
            <person name="Comerci D.J."/>
            <person name="Tolmasky M.E."/>
            <person name="Larimer F.W."/>
            <person name="Malfatti S.A."/>
            <person name="Vergez L.M."/>
            <person name="Aguero F."/>
            <person name="Land M.L."/>
            <person name="Ugalde R.A."/>
            <person name="Garcia E."/>
        </authorList>
    </citation>
    <scope>NUCLEOTIDE SEQUENCE [LARGE SCALE GENOMIC DNA]</scope>
    <source>
        <strain>2308</strain>
    </source>
</reference>
<comment type="function">
    <text evidence="1">Bidirectionally degrades single-stranded DNA into large acid-insoluble oligonucleotides, which are then degraded further into small acid-soluble oligonucleotides.</text>
</comment>
<comment type="catalytic activity">
    <reaction evidence="1">
        <text>Exonucleolytic cleavage in either 5'- to 3'- or 3'- to 5'-direction to yield nucleoside 5'-phosphates.</text>
        <dbReference type="EC" id="3.1.11.6"/>
    </reaction>
</comment>
<comment type="subunit">
    <text evidence="1">Heterooligomer composed of large and small subunits.</text>
</comment>
<comment type="subcellular location">
    <subcellularLocation>
        <location evidence="1">Cytoplasm</location>
    </subcellularLocation>
</comment>
<comment type="similarity">
    <text evidence="1">Belongs to the XseA family.</text>
</comment>
<evidence type="ECO:0000255" key="1">
    <source>
        <dbReference type="HAMAP-Rule" id="MF_00378"/>
    </source>
</evidence>